<keyword id="KW-0067">ATP-binding</keyword>
<keyword id="KW-0418">Kinase</keyword>
<keyword id="KW-0547">Nucleotide-binding</keyword>
<keyword id="KW-1185">Reference proteome</keyword>
<keyword id="KW-0723">Serine/threonine-protein kinase</keyword>
<keyword id="KW-0808">Transferase</keyword>
<protein>
    <recommendedName>
        <fullName>Protein kinase ORF73</fullName>
        <ecNumber>2.7.11.1</ecNumber>
    </recommendedName>
</protein>
<proteinExistence type="inferred from homology"/>
<feature type="chain" id="PRO_0000086190" description="Protein kinase ORF73">
    <location>
        <begin position="1"/>
        <end position="962"/>
    </location>
</feature>
<feature type="domain" description="Protein kinase" evidence="1">
    <location>
        <begin position="301"/>
        <end position="595"/>
    </location>
</feature>
<feature type="region of interest" description="Disordered" evidence="3">
    <location>
        <begin position="1"/>
        <end position="28"/>
    </location>
</feature>
<feature type="region of interest" description="Disordered" evidence="3">
    <location>
        <begin position="62"/>
        <end position="152"/>
    </location>
</feature>
<feature type="compositionally biased region" description="Acidic residues" evidence="3">
    <location>
        <begin position="81"/>
        <end position="90"/>
    </location>
</feature>
<feature type="compositionally biased region" description="Polar residues" evidence="3">
    <location>
        <begin position="143"/>
        <end position="152"/>
    </location>
</feature>
<feature type="active site" description="Proton acceptor" evidence="1 2">
    <location>
        <position position="434"/>
    </location>
</feature>
<feature type="binding site" evidence="1">
    <location>
        <begin position="307"/>
        <end position="315"/>
    </location>
    <ligand>
        <name>ATP</name>
        <dbReference type="ChEBI" id="CHEBI:30616"/>
    </ligand>
</feature>
<feature type="binding site" evidence="1">
    <location>
        <position position="324"/>
    </location>
    <ligand>
        <name>ATP</name>
        <dbReference type="ChEBI" id="CHEBI:30616"/>
    </ligand>
</feature>
<comment type="catalytic activity">
    <reaction>
        <text>L-seryl-[protein] + ATP = O-phospho-L-seryl-[protein] + ADP + H(+)</text>
        <dbReference type="Rhea" id="RHEA:17989"/>
        <dbReference type="Rhea" id="RHEA-COMP:9863"/>
        <dbReference type="Rhea" id="RHEA-COMP:11604"/>
        <dbReference type="ChEBI" id="CHEBI:15378"/>
        <dbReference type="ChEBI" id="CHEBI:29999"/>
        <dbReference type="ChEBI" id="CHEBI:30616"/>
        <dbReference type="ChEBI" id="CHEBI:83421"/>
        <dbReference type="ChEBI" id="CHEBI:456216"/>
        <dbReference type="EC" id="2.7.11.1"/>
    </reaction>
</comment>
<comment type="catalytic activity">
    <reaction>
        <text>L-threonyl-[protein] + ATP = O-phospho-L-threonyl-[protein] + ADP + H(+)</text>
        <dbReference type="Rhea" id="RHEA:46608"/>
        <dbReference type="Rhea" id="RHEA-COMP:11060"/>
        <dbReference type="Rhea" id="RHEA-COMP:11605"/>
        <dbReference type="ChEBI" id="CHEBI:15378"/>
        <dbReference type="ChEBI" id="CHEBI:30013"/>
        <dbReference type="ChEBI" id="CHEBI:30616"/>
        <dbReference type="ChEBI" id="CHEBI:61977"/>
        <dbReference type="ChEBI" id="CHEBI:456216"/>
        <dbReference type="EC" id="2.7.11.1"/>
    </reaction>
</comment>
<comment type="similarity">
    <text evidence="1">Belongs to the protein kinase superfamily. Ser/Thr protein kinase family.</text>
</comment>
<accession>Q00094</accession>
<organismHost>
    <name type="scientific">Ictaluridae</name>
    <name type="common">bullhead catfishes</name>
    <dbReference type="NCBI Taxonomy" id="7996"/>
</organismHost>
<gene>
    <name type="primary">ORF73</name>
</gene>
<organism>
    <name type="scientific">Ictalurid herpesvirus 1 (strain Auburn)</name>
    <name type="common">IcHV-1</name>
    <name type="synonym">Channel catfish herpesvirus</name>
    <dbReference type="NCBI Taxonomy" id="766178"/>
    <lineage>
        <taxon>Viruses</taxon>
        <taxon>Duplodnaviria</taxon>
        <taxon>Heunggongvirae</taxon>
        <taxon>Peploviricota</taxon>
        <taxon>Herviviricetes</taxon>
        <taxon>Herpesvirales</taxon>
        <taxon>Alloherpesviridae</taxon>
        <taxon>Ictavirus</taxon>
        <taxon>Ictavirus ictaluridallo1</taxon>
        <taxon>Ictalurid herpesvirus 1</taxon>
    </lineage>
</organism>
<name>KR73_ICHVA</name>
<dbReference type="EC" id="2.7.11.1"/>
<dbReference type="EMBL" id="M75136">
    <property type="protein sequence ID" value="AAA88175.1"/>
    <property type="molecule type" value="Genomic_DNA"/>
</dbReference>
<dbReference type="PIR" id="H36793">
    <property type="entry name" value="TVBEI4"/>
</dbReference>
<dbReference type="RefSeq" id="NP_041163.1">
    <property type="nucleotide sequence ID" value="NC_001493.2"/>
</dbReference>
<dbReference type="SMR" id="Q00094"/>
<dbReference type="GeneID" id="1488397"/>
<dbReference type="KEGG" id="vg:1488397"/>
<dbReference type="Proteomes" id="UP000007643">
    <property type="component" value="Segment"/>
</dbReference>
<dbReference type="GO" id="GO:0005524">
    <property type="term" value="F:ATP binding"/>
    <property type="evidence" value="ECO:0007669"/>
    <property type="project" value="UniProtKB-KW"/>
</dbReference>
<dbReference type="GO" id="GO:0106310">
    <property type="term" value="F:protein serine kinase activity"/>
    <property type="evidence" value="ECO:0007669"/>
    <property type="project" value="RHEA"/>
</dbReference>
<dbReference type="GO" id="GO:0004674">
    <property type="term" value="F:protein serine/threonine kinase activity"/>
    <property type="evidence" value="ECO:0007669"/>
    <property type="project" value="UniProtKB-KW"/>
</dbReference>
<dbReference type="Gene3D" id="1.10.510.10">
    <property type="entry name" value="Transferase(Phosphotransferase) domain 1"/>
    <property type="match status" value="1"/>
</dbReference>
<dbReference type="InterPro" id="IPR011009">
    <property type="entry name" value="Kinase-like_dom_sf"/>
</dbReference>
<dbReference type="InterPro" id="IPR000719">
    <property type="entry name" value="Prot_kinase_dom"/>
</dbReference>
<dbReference type="InterPro" id="IPR008271">
    <property type="entry name" value="Ser/Thr_kinase_AS"/>
</dbReference>
<dbReference type="InterPro" id="IPR053235">
    <property type="entry name" value="Ser_Thr_kinase"/>
</dbReference>
<dbReference type="PANTHER" id="PTHR24361">
    <property type="entry name" value="MITOGEN-ACTIVATED KINASE KINASE KINASE"/>
    <property type="match status" value="1"/>
</dbReference>
<dbReference type="PANTHER" id="PTHR24361:SF433">
    <property type="entry name" value="PROTEIN KINASE DOMAIN-CONTAINING PROTEIN"/>
    <property type="match status" value="1"/>
</dbReference>
<dbReference type="Pfam" id="PF00069">
    <property type="entry name" value="Pkinase"/>
    <property type="match status" value="1"/>
</dbReference>
<dbReference type="SMART" id="SM00220">
    <property type="entry name" value="S_TKc"/>
    <property type="match status" value="1"/>
</dbReference>
<dbReference type="SUPFAM" id="SSF56112">
    <property type="entry name" value="Protein kinase-like (PK-like)"/>
    <property type="match status" value="1"/>
</dbReference>
<dbReference type="PROSITE" id="PS50011">
    <property type="entry name" value="PROTEIN_KINASE_DOM"/>
    <property type="match status" value="1"/>
</dbReference>
<dbReference type="PROSITE" id="PS00108">
    <property type="entry name" value="PROTEIN_KINASE_ST"/>
    <property type="match status" value="1"/>
</dbReference>
<evidence type="ECO:0000255" key="1">
    <source>
        <dbReference type="PROSITE-ProRule" id="PRU00159"/>
    </source>
</evidence>
<evidence type="ECO:0000255" key="2">
    <source>
        <dbReference type="PROSITE-ProRule" id="PRU10027"/>
    </source>
</evidence>
<evidence type="ECO:0000256" key="3">
    <source>
        <dbReference type="SAM" id="MobiDB-lite"/>
    </source>
</evidence>
<reference key="1">
    <citation type="journal article" date="1992" name="Virology">
        <title>Channel catfish virus: a new type of herpesvirus.</title>
        <authorList>
            <person name="Davison A.J."/>
        </authorList>
    </citation>
    <scope>NUCLEOTIDE SEQUENCE [LARGE SCALE GENOMIC DNA]</scope>
    <source>
        <strain>Auburn 1</strain>
    </source>
</reference>
<sequence>MADRTPKRSADGLIHDAKPSKVTKNDRPPVIDFKRILAAKIAEKRGGPPVSAVSLIAASTVSTPAPVTYGSVGLPTRQLSDSDDDDEEDNATAKTHSVPIPVFKPPDQLTAPHTVKRKPTQPPTPTRPVHQAQATQRRPVVSYDTTGRRATTQDEITDAFGELDNELRRLAALTPVPGGWPESTRGERNQMVNPVGVKELPIVVQSITDRAIQIENRLEAQFHGATEMVKTVVPTVSVRGGVFTRHVITDTKRQPFLIEACEFIPSMIQEAPIPFRAVASKPFAAGTKLLTPKAGAPAVDLRAAPVLGKGYFGTVYKVGNLACKVQHGRVMPGVSNAISDVVEESLLGSRLQHPNIITFVKGFLYHGAVNTEAVCVSLWELGLMDLLSFTQQSFWQPGKDACDPLVKRYLARRFEKHTLLGLEHLHERGLMHRDIKSQNIFIFTNRGRLVAKLGDLGCCSKGAFCDAGGTRAYFPPETLAINVQCCASDMWAWGVTMWEVHTGRTPFWGGTDISMQKVFRYTGGFDNRAYNQLAVARHAMAAADSAVKPVPDLEGLMERGKVSLSPSFTDIMKSVLRLNPNDRATASDLLKSPRYTDESLTEGCECTDRKSLEKNAPEMIRLLEHNHLPPQKVIMTTDPHERDQLAEKERWGQVPMEVTGDFRPAPLYMPWLARADMGDDHTAKKLITLTPRDLVSVYPVVATKEYGVKEIRVYRPPEFSPTYDIVYLELKPTIDFEAIQSLMEGIQAIQKSIPYVVPVFHYTLGAHGTKRYMIYVTPAKRSITELNFDGETDDGTLLGAVILKQLISLAVAFRDNGINFITNMYNTHILYHDPRGVDIGPLKLDMVIYMLLHQTNNLNVYKLSSTDRTLRDPGDPVLKTCLAAYTYVKLLMSAPRALERLVPKTTISACKRFDDFFMIPTVKKISIPPDTKIKVPKLFSFIKIEPPQDISGGTVYASGTLS</sequence>